<comment type="function">
    <text evidence="1">Intercellular signal essential for a variety of patterning events during development.</text>
</comment>
<comment type="subcellular location">
    <subcellularLocation>
        <location evidence="1">Cell membrane</location>
    </subcellularLocation>
    <subcellularLocation>
        <location evidence="1">Secreted</location>
        <location evidence="1">Extracellular space</location>
    </subcellularLocation>
    <text evidence="1">Indian hedgehog protein N-product: Cell membrane; Lipid-anchor; Extracellular side. The N-terminal peptide remains associated with the cell surface. Indian hedgehog protein C-product: Secreted, extracellular space. The C-terminal peptide diffuses from the cell.</text>
</comment>
<comment type="domain">
    <text evidence="1">The indian hedgehog protein N-product binds calcium and zinc ions; this stabilizes the protein fold and is essential for protein-protein interactions mediated by this domain.</text>
</comment>
<comment type="PTM">
    <text evidence="1">The C-terminal domain displays an autoproteolysis activity and a cholesterol transferase activity. Both activities result in the cleavage of the full-length protein and covalent attachment of a cholesterol moiety to the C-terminal of the newly generated N-terminal fragment (N-product). The N-product is the active species in both local and long-range signaling, whereas the C-product has no signaling activity (By similarity).</text>
</comment>
<comment type="PTM">
    <text evidence="1">Cholesterylation is required for N-product targeting to lipid rafts and multimerization.</text>
</comment>
<comment type="PTM">
    <text evidence="1">N-palmitoylation is required for N-product multimerization and full activity.</text>
</comment>
<comment type="similarity">
    <text evidence="3">Belongs to the hedgehog family.</text>
</comment>
<feature type="chain" id="PRO_0000058749" description="Indian hedgehog protein">
    <location>
        <begin position="1" status="less than"/>
        <end position="58" status="greater than"/>
    </location>
</feature>
<feature type="binding site" evidence="2">
    <location>
        <position position="14"/>
    </location>
    <ligand>
        <name>Ca(2+)</name>
        <dbReference type="ChEBI" id="CHEBI:29108"/>
        <label>1</label>
    </ligand>
</feature>
<feature type="binding site" evidence="2">
    <location>
        <position position="14"/>
    </location>
    <ligand>
        <name>Ca(2+)</name>
        <dbReference type="ChEBI" id="CHEBI:29108"/>
        <label>2</label>
    </ligand>
</feature>
<feature type="binding site" evidence="2">
    <location>
        <position position="17"/>
    </location>
    <ligand>
        <name>Ca(2+)</name>
        <dbReference type="ChEBI" id="CHEBI:29108"/>
        <label>2</label>
    </ligand>
</feature>
<feature type="binding site" evidence="2">
    <location>
        <position position="19"/>
    </location>
    <ligand>
        <name>Ca(2+)</name>
        <dbReference type="ChEBI" id="CHEBI:29108"/>
        <label>2</label>
    </ligand>
</feature>
<feature type="binding site" evidence="2">
    <location>
        <position position="28"/>
    </location>
    <ligand>
        <name>Zn(2+)</name>
        <dbReference type="ChEBI" id="CHEBI:29105"/>
    </ligand>
</feature>
<feature type="binding site" evidence="2">
    <location>
        <position position="35"/>
    </location>
    <ligand>
        <name>Zn(2+)</name>
        <dbReference type="ChEBI" id="CHEBI:29105"/>
    </ligand>
</feature>
<feature type="non-terminal residue">
    <location>
        <position position="1"/>
    </location>
</feature>
<feature type="non-terminal residue">
    <location>
        <position position="58"/>
    </location>
</feature>
<evidence type="ECO:0000250" key="1"/>
<evidence type="ECO:0000250" key="2">
    <source>
        <dbReference type="UniProtKB" id="Q14623"/>
    </source>
</evidence>
<evidence type="ECO:0000305" key="3"/>
<keyword id="KW-0068">Autocatalytic cleavage</keyword>
<keyword id="KW-0106">Calcium</keyword>
<keyword id="KW-1003">Cell membrane</keyword>
<keyword id="KW-0217">Developmental protein</keyword>
<keyword id="KW-0378">Hydrolase</keyword>
<keyword id="KW-0449">Lipoprotein</keyword>
<keyword id="KW-0472">Membrane</keyword>
<keyword id="KW-0479">Metal-binding</keyword>
<keyword id="KW-0564">Palmitate</keyword>
<keyword id="KW-0645">Protease</keyword>
<keyword id="KW-0964">Secreted</keyword>
<keyword id="KW-0862">Zinc</keyword>
<accession>P79871</accession>
<name>IHH_RASPA</name>
<sequence length="58" mass="6688">VMNLWPGVRLRVMEGWDEDGHHSEESLHYEGRAVDITTSDRDRNKYAMLARLAVEAGF</sequence>
<proteinExistence type="inferred from homology"/>
<organism>
    <name type="scientific">Rasbora paviana</name>
    <name type="common">Sidestripe rasbora</name>
    <dbReference type="NCBI Taxonomy" id="38659"/>
    <lineage>
        <taxon>Eukaryota</taxon>
        <taxon>Metazoa</taxon>
        <taxon>Chordata</taxon>
        <taxon>Craniata</taxon>
        <taxon>Vertebrata</taxon>
        <taxon>Euteleostomi</taxon>
        <taxon>Actinopterygii</taxon>
        <taxon>Neopterygii</taxon>
        <taxon>Teleostei</taxon>
        <taxon>Ostariophysi</taxon>
        <taxon>Cypriniformes</taxon>
        <taxon>Danionidae</taxon>
        <taxon>Rasborinae</taxon>
        <taxon>Rasbora</taxon>
    </lineage>
</organism>
<protein>
    <recommendedName>
        <fullName>Indian hedgehog protein</fullName>
        <shortName>IHH</shortName>
    </recommendedName>
</protein>
<gene>
    <name type="primary">ihh</name>
</gene>
<reference key="1">
    <citation type="journal article" date="1996" name="Proc. Natl. Acad. Sci. U.S.A.">
        <title>Evolutionary analyses of hedgehog and Hoxd-10 genes in fish species closely related to the zebrafish.</title>
        <authorList>
            <person name="Zardoya R."/>
            <person name="Abouheif E."/>
            <person name="Meyer A."/>
        </authorList>
    </citation>
    <scope>NUCLEOTIDE SEQUENCE [GENOMIC DNA]</scope>
    <source>
        <tissue>Muscle</tissue>
    </source>
</reference>
<dbReference type="EMBL" id="U51378">
    <property type="protein sequence ID" value="AAB38611.1"/>
    <property type="molecule type" value="Genomic_DNA"/>
</dbReference>
<dbReference type="SMR" id="P79871"/>
<dbReference type="GO" id="GO:0005615">
    <property type="term" value="C:extracellular space"/>
    <property type="evidence" value="ECO:0007669"/>
    <property type="project" value="TreeGrafter"/>
</dbReference>
<dbReference type="GO" id="GO:0005886">
    <property type="term" value="C:plasma membrane"/>
    <property type="evidence" value="ECO:0007669"/>
    <property type="project" value="UniProtKB-SubCell"/>
</dbReference>
<dbReference type="GO" id="GO:0005509">
    <property type="term" value="F:calcium ion binding"/>
    <property type="evidence" value="ECO:0007669"/>
    <property type="project" value="TreeGrafter"/>
</dbReference>
<dbReference type="GO" id="GO:0005113">
    <property type="term" value="F:patched binding"/>
    <property type="evidence" value="ECO:0007669"/>
    <property type="project" value="TreeGrafter"/>
</dbReference>
<dbReference type="GO" id="GO:0008233">
    <property type="term" value="F:peptidase activity"/>
    <property type="evidence" value="ECO:0007669"/>
    <property type="project" value="UniProtKB-KW"/>
</dbReference>
<dbReference type="GO" id="GO:0001708">
    <property type="term" value="P:cell fate specification"/>
    <property type="evidence" value="ECO:0007669"/>
    <property type="project" value="TreeGrafter"/>
</dbReference>
<dbReference type="GO" id="GO:0007267">
    <property type="term" value="P:cell-cell signaling"/>
    <property type="evidence" value="ECO:0007669"/>
    <property type="project" value="InterPro"/>
</dbReference>
<dbReference type="GO" id="GO:0006508">
    <property type="term" value="P:proteolysis"/>
    <property type="evidence" value="ECO:0007669"/>
    <property type="project" value="UniProtKB-KW"/>
</dbReference>
<dbReference type="GO" id="GO:0010468">
    <property type="term" value="P:regulation of gene expression"/>
    <property type="evidence" value="ECO:0007669"/>
    <property type="project" value="TreeGrafter"/>
</dbReference>
<dbReference type="GO" id="GO:0007224">
    <property type="term" value="P:smoothened signaling pathway"/>
    <property type="evidence" value="ECO:0007669"/>
    <property type="project" value="TreeGrafter"/>
</dbReference>
<dbReference type="Gene3D" id="3.30.1380.10">
    <property type="match status" value="1"/>
</dbReference>
<dbReference type="InterPro" id="IPR001657">
    <property type="entry name" value="Hedgehog"/>
</dbReference>
<dbReference type="InterPro" id="IPR009045">
    <property type="entry name" value="Hedgehog_sig/DD-Pept_Zn-bd_sf"/>
</dbReference>
<dbReference type="InterPro" id="IPR050387">
    <property type="entry name" value="Hedgehog_Signaling"/>
</dbReference>
<dbReference type="InterPro" id="IPR000320">
    <property type="entry name" value="Hedgehog_signalling_dom"/>
</dbReference>
<dbReference type="PANTHER" id="PTHR11889">
    <property type="entry name" value="HEDGEHOG"/>
    <property type="match status" value="1"/>
</dbReference>
<dbReference type="PANTHER" id="PTHR11889:SF39">
    <property type="entry name" value="INDIAN HEDGEHOG PROTEIN"/>
    <property type="match status" value="1"/>
</dbReference>
<dbReference type="Pfam" id="PF01085">
    <property type="entry name" value="HH_signal"/>
    <property type="match status" value="1"/>
</dbReference>
<dbReference type="PRINTS" id="PR00632">
    <property type="entry name" value="SONICHHOG"/>
</dbReference>
<dbReference type="SUPFAM" id="SSF55166">
    <property type="entry name" value="Hedgehog/DD-peptidase"/>
    <property type="match status" value="1"/>
</dbReference>